<evidence type="ECO:0000255" key="1"/>
<evidence type="ECO:0000256" key="2">
    <source>
        <dbReference type="SAM" id="MobiDB-lite"/>
    </source>
</evidence>
<evidence type="ECO:0000269" key="3">
    <source>
    </source>
</evidence>
<evidence type="ECO:0000269" key="4">
    <source>
    </source>
</evidence>
<evidence type="ECO:0000269" key="5">
    <source>
    </source>
</evidence>
<evidence type="ECO:0000269" key="6">
    <source>
    </source>
</evidence>
<evidence type="ECO:0000303" key="7">
    <source>
    </source>
</evidence>
<evidence type="ECO:0000305" key="8"/>
<evidence type="ECO:0000305" key="9">
    <source>
    </source>
</evidence>
<evidence type="ECO:0000305" key="10">
    <source>
    </source>
</evidence>
<evidence type="ECO:0000312" key="11">
    <source>
        <dbReference type="EMBL" id="AFR97663.2"/>
    </source>
</evidence>
<evidence type="ECO:0000312" key="12">
    <source>
        <dbReference type="Proteomes" id="UP000010091"/>
    </source>
</evidence>
<proteinExistence type="evidence at protein level"/>
<keyword id="KW-1003">Cell membrane</keyword>
<keyword id="KW-0472">Membrane</keyword>
<keyword id="KW-0812">Transmembrane</keyword>
<keyword id="KW-1133">Transmembrane helix</keyword>
<keyword id="KW-0813">Transport</keyword>
<sequence>MSDEKNYGISLAAPARPDLGSRTASQLEKATASHVEFATPKDPGALHDATLMAGERTEKLTKFVVGLALFASVSGFCFGFDTGVISAALVSIKDDFGHILDDTEKEWISAATSCGALVGALSSGALADRVGRKWTLAVGDVWFTLGAIIICSSFSVVQMIVGRAVLGLGVGTAAAIAPLYIAEVAPTRFRGALVTVQSIAITGGQFFSYCIGIPLTGHNGWRIQFAIGIVPAVVQAAVVHFLPESPRYDLLRGQREAALATIHRSYKGMSEDYIAVKFAALEEVVGISADFNRGHTLGQKMRLVLTEGKYRKPAITALGIGIFQQLCGFNSLMYYAATIFSYAGFDNPTSVGLIVSGTNWFFTFVAMMILDRVGKRRILLSTYPGMIAGLALASVAFWKMTGSTGHRLVEGTEYPQQWSNMMLGMMVVFIAFYATGSGNITWTVGEMFPLEMRGIGASILAGGVWAANIVISATFLTLMNAIGPTPTFALYAGICLAGLIFIYFCYPEPSGLSLEEIQIIYNYGFGVQKSREIRAEHKLKAQEMRDRANSHIGGSATASDDQLNKV</sequence>
<name>ITR1A_CRYNH</name>
<accession>J9VTS6</accession>
<comment type="function">
    <text evidence="3 4 5">Major transporter for myo-inositol (PubMed:20689743, PubMed:21398509). Plays a role in the traversal of the host blood-brain barrier (PubMed:23592982).</text>
</comment>
<comment type="catalytic activity">
    <reaction evidence="9 10">
        <text>myo-inositol(out) + H(+)(out) = myo-inositol(in) + H(+)(in)</text>
        <dbReference type="Rhea" id="RHEA:60364"/>
        <dbReference type="ChEBI" id="CHEBI:15378"/>
        <dbReference type="ChEBI" id="CHEBI:17268"/>
    </reaction>
</comment>
<comment type="subcellular location">
    <subcellularLocation>
        <location evidence="10">Cell membrane</location>
        <topology evidence="1">Multi-pass membrane protein</topology>
    </subcellularLocation>
</comment>
<comment type="induction">
    <text evidence="3 4">Expressed during growth on inositol and during sexual reproduction (PubMed:20689743). Expressed during infection (PubMed:21398509).</text>
</comment>
<comment type="disruption phenotype">
    <text evidence="3 4 5 6">Simultaneous disruption of INO1 lowers hyphal density and leads to a severe sporulation defect and attenuated virulence in a murine inhalation model of systemic infection (PubMed:20689743). Simultaneous disruption of ITR1A results in defective mating hyphae, reduces production of phosphatidylinositol and glucuronoxylomannan, reduces laccase activity, and increases expression of ITR1, ITR2, ITR3, ITR3A, ITR3B, ITR5 and ITR6 (PubMed:21398509, PubMed:23592982, PubMed:25201772). Simultaneous disruption of ITR3C impairs the ability of the fungi to traverse the blood-brain barrier and leads to attenuated virulence in a murine inhalation model of systemic infection, and the brain infection models by tail vein or intracerebral injection (PubMed:21398509, PubMed:23592982, PubMed:25201772).</text>
</comment>
<comment type="similarity">
    <text evidence="8">Belongs to the major facilitator superfamily. Sugar transporter (TC 2.A.1.1) family.</text>
</comment>
<reference evidence="12" key="1">
    <citation type="journal article" date="2014" name="PLoS Genet.">
        <title>Analysis of the genome and transcriptome of Cryptococcus neoformans var. grubii reveals complex RNA expression and microevolution leading to virulence attenuation.</title>
        <authorList>
            <person name="Janbon G."/>
            <person name="Ormerod K.L."/>
            <person name="Paulet D."/>
            <person name="Byrnes E.J. III"/>
            <person name="Yadav V."/>
            <person name="Chatterjee G."/>
            <person name="Mullapudi N."/>
            <person name="Hon C.-C."/>
            <person name="Billmyre R.B."/>
            <person name="Brunel F."/>
            <person name="Bahn Y.-S."/>
            <person name="Chen W."/>
            <person name="Chen Y."/>
            <person name="Chow E.W.L."/>
            <person name="Coppee J.-Y."/>
            <person name="Floyd-Averette A."/>
            <person name="Gaillardin C."/>
            <person name="Gerik K.J."/>
            <person name="Goldberg J."/>
            <person name="Gonzalez-Hilarion S."/>
            <person name="Gujja S."/>
            <person name="Hamlin J.L."/>
            <person name="Hsueh Y.-P."/>
            <person name="Ianiri G."/>
            <person name="Jones S."/>
            <person name="Kodira C.D."/>
            <person name="Kozubowski L."/>
            <person name="Lam W."/>
            <person name="Marra M."/>
            <person name="Mesner L.D."/>
            <person name="Mieczkowski P.A."/>
            <person name="Moyrand F."/>
            <person name="Nielsen K."/>
            <person name="Proux C."/>
            <person name="Rossignol T."/>
            <person name="Schein J.E."/>
            <person name="Sun S."/>
            <person name="Wollschlaeger C."/>
            <person name="Wood I.A."/>
            <person name="Zeng Q."/>
            <person name="Neuveglise C."/>
            <person name="Newlon C.S."/>
            <person name="Perfect J.R."/>
            <person name="Lodge J.K."/>
            <person name="Idnurm A."/>
            <person name="Stajich J.E."/>
            <person name="Kronstad J.W."/>
            <person name="Sanyal K."/>
            <person name="Heitman J."/>
            <person name="Fraser J.A."/>
            <person name="Cuomo C.A."/>
            <person name="Dietrich F.S."/>
        </authorList>
    </citation>
    <scope>NUCLEOTIDE SEQUENCE [LARGE SCALE GENOMIC DNA]</scope>
    <source>
        <strain evidence="12">H99 / ATCC 208821 / CBS 10515 / FGSC 9487</strain>
    </source>
</reference>
<reference evidence="8" key="2">
    <citation type="journal article" date="2010" name="MBio">
        <title>Role of an expanded inositol transporter repertoire in Cryptococcus neoformans sexual reproduction and virulence.</title>
        <authorList>
            <person name="Xue C."/>
            <person name="Liu T."/>
            <person name="Chen L."/>
            <person name="Li W."/>
            <person name="Liu I."/>
            <person name="Kronstad J.W."/>
            <person name="Seyfang A."/>
            <person name="Heitman J."/>
        </authorList>
    </citation>
    <scope>FUNCTION</scope>
    <scope>CATALYTIC ACTIVITY</scope>
    <scope>INDUCTION</scope>
    <scope>DISRUPTION PHENOTYPE</scope>
</reference>
<reference evidence="8" key="3">
    <citation type="journal article" date="2011" name="Eukaryot. Cell">
        <title>Two major inositol transporters and their role in cryptococcal virulence.</title>
        <authorList>
            <person name="Wang Y."/>
            <person name="Liu T.B."/>
            <person name="Delmas G."/>
            <person name="Park S."/>
            <person name="Perlin D."/>
            <person name="Xue C."/>
        </authorList>
    </citation>
    <scope>FUNCTION</scope>
    <scope>CATALYTIC ACTIVITY</scope>
    <scope>SUBCELLULAR LOCATION</scope>
    <scope>INDUCTION</scope>
    <scope>DISRUPTION PHENOTYPE</scope>
</reference>
<reference evidence="8" key="4">
    <citation type="journal article" date="2013" name="PLoS Pathog.">
        <title>Brain inositol is a novel stimulator for promoting Cryptococcus penetration of the blood-brain barrier.</title>
        <authorList>
            <person name="Liu T.B."/>
            <person name="Kim J.C."/>
            <person name="Wang Y."/>
            <person name="Toffaletti D.L."/>
            <person name="Eugenin E."/>
            <person name="Perfect J.R."/>
            <person name="Kim K.J."/>
            <person name="Xue C."/>
        </authorList>
    </citation>
    <scope>FUNCTION</scope>
    <scope>DISRUPTION PHENOTYPE</scope>
</reference>
<reference evidence="8" key="5">
    <citation type="journal article" date="2014" name="Cell Commun. Signal.">
        <title>Cryptococcus inositol utilization modulates the host protective immune response during brain infection.</title>
        <authorList>
            <person name="Liu T.B."/>
            <person name="Subbian S."/>
            <person name="Pan W."/>
            <person name="Eugenin E."/>
            <person name="Xie J."/>
            <person name="Xue C."/>
        </authorList>
    </citation>
    <scope>DISRUPTION PHENOTYPE</scope>
</reference>
<feature type="chain" id="PRO_0000456779" description="Myo-inositol transporter 1A">
    <location>
        <begin position="1"/>
        <end position="566"/>
    </location>
</feature>
<feature type="topological domain" description="Cytoplasmic" evidence="8">
    <location>
        <begin position="1"/>
        <end position="64"/>
    </location>
</feature>
<feature type="transmembrane region" description="Helical; Name=1" evidence="1">
    <location>
        <begin position="65"/>
        <end position="85"/>
    </location>
</feature>
<feature type="topological domain" description="Extracellular" evidence="8">
    <location>
        <begin position="86"/>
        <end position="106"/>
    </location>
</feature>
<feature type="transmembrane region" description="Helical; Name=2" evidence="1">
    <location>
        <begin position="107"/>
        <end position="127"/>
    </location>
</feature>
<feature type="topological domain" description="Cytoplasmic" evidence="8">
    <location>
        <begin position="128"/>
        <end position="140"/>
    </location>
</feature>
<feature type="transmembrane region" description="Helical; Name=3" evidence="1">
    <location>
        <begin position="141"/>
        <end position="161"/>
    </location>
</feature>
<feature type="topological domain" description="Extracellular" evidence="8">
    <location>
        <begin position="162"/>
        <end position="163"/>
    </location>
</feature>
<feature type="transmembrane region" description="Helical; Name=4" evidence="1">
    <location>
        <begin position="164"/>
        <end position="184"/>
    </location>
</feature>
<feature type="topological domain" description="Cytoplasmic" evidence="8">
    <location>
        <begin position="185"/>
        <end position="192"/>
    </location>
</feature>
<feature type="transmembrane region" description="Helical; Name=5" evidence="1">
    <location>
        <begin position="193"/>
        <end position="213"/>
    </location>
</feature>
<feature type="topological domain" description="Extracellular" evidence="8">
    <location>
        <begin position="214"/>
        <end position="222"/>
    </location>
</feature>
<feature type="transmembrane region" description="Helical; Name=6" evidence="1">
    <location>
        <begin position="223"/>
        <end position="243"/>
    </location>
</feature>
<feature type="topological domain" description="Cytoplasmic" evidence="8">
    <location>
        <begin position="244"/>
        <end position="313"/>
    </location>
</feature>
<feature type="transmembrane region" description="Helical; Name=7" evidence="1">
    <location>
        <begin position="314"/>
        <end position="334"/>
    </location>
</feature>
<feature type="topological domain" description="Extracellular" evidence="8">
    <location>
        <begin position="335"/>
        <end position="349"/>
    </location>
</feature>
<feature type="transmembrane region" description="Helical; Name=8" evidence="1">
    <location>
        <begin position="350"/>
        <end position="370"/>
    </location>
</feature>
<feature type="topological domain" description="Cytoplasmic" evidence="8">
    <location>
        <begin position="371"/>
        <end position="377"/>
    </location>
</feature>
<feature type="transmembrane region" description="Helical; Name=9" evidence="1">
    <location>
        <begin position="378"/>
        <end position="398"/>
    </location>
</feature>
<feature type="topological domain" description="Extracellular" evidence="8">
    <location>
        <begin position="399"/>
        <end position="421"/>
    </location>
</feature>
<feature type="transmembrane region" description="Helical; Name=10" evidence="1">
    <location>
        <begin position="422"/>
        <end position="442"/>
    </location>
</feature>
<feature type="topological domain" description="Cytoplasmic" evidence="8">
    <location>
        <begin position="443"/>
        <end position="458"/>
    </location>
</feature>
<feature type="transmembrane region" description="Helical; Name=11" evidence="1">
    <location>
        <begin position="459"/>
        <end position="479"/>
    </location>
</feature>
<feature type="topological domain" description="Extracellular" evidence="8">
    <location>
        <begin position="480"/>
        <end position="485"/>
    </location>
</feature>
<feature type="transmembrane region" description="Helical; Name=12" evidence="1">
    <location>
        <begin position="486"/>
        <end position="506"/>
    </location>
</feature>
<feature type="topological domain" description="Cytoplasmic" evidence="8">
    <location>
        <begin position="507"/>
        <end position="566"/>
    </location>
</feature>
<feature type="region of interest" description="Disordered" evidence="2">
    <location>
        <begin position="546"/>
        <end position="566"/>
    </location>
</feature>
<feature type="compositionally biased region" description="Polar residues" evidence="2">
    <location>
        <begin position="556"/>
        <end position="566"/>
    </location>
</feature>
<protein>
    <recommendedName>
        <fullName evidence="7">Myo-inositol transporter 1A</fullName>
    </recommendedName>
</protein>
<organism evidence="12">
    <name type="scientific">Cryptococcus neoformans var. grubii serotype A (strain H99 / ATCC 208821 / CBS 10515 / FGSC 9487)</name>
    <name type="common">Filobasidiella neoformans var. grubii</name>
    <dbReference type="NCBI Taxonomy" id="235443"/>
    <lineage>
        <taxon>Eukaryota</taxon>
        <taxon>Fungi</taxon>
        <taxon>Dikarya</taxon>
        <taxon>Basidiomycota</taxon>
        <taxon>Agaricomycotina</taxon>
        <taxon>Tremellomycetes</taxon>
        <taxon>Tremellales</taxon>
        <taxon>Cryptococcaceae</taxon>
        <taxon>Cryptococcus</taxon>
        <taxon>Cryptococcus neoformans species complex</taxon>
    </lineage>
</organism>
<dbReference type="EMBL" id="CP003829">
    <property type="protein sequence ID" value="AFR97663.2"/>
    <property type="molecule type" value="Genomic_DNA"/>
</dbReference>
<dbReference type="EMBL" id="CP003829">
    <property type="protein sequence ID" value="AGV14674.1"/>
    <property type="molecule type" value="Genomic_DNA"/>
</dbReference>
<dbReference type="RefSeq" id="XP_012052055.1">
    <property type="nucleotide sequence ID" value="XM_012196665.1"/>
</dbReference>
<dbReference type="RefSeq" id="XP_012052058.1">
    <property type="nucleotide sequence ID" value="XM_012196668.1"/>
</dbReference>
<dbReference type="SMR" id="J9VTS6"/>
<dbReference type="GeneID" id="23887954"/>
<dbReference type="KEGG" id="cng:CNAG_04552"/>
<dbReference type="VEuPathDB" id="FungiDB:CNAG_04552"/>
<dbReference type="HOGENOM" id="CLU_001265_30_5_1"/>
<dbReference type="Proteomes" id="UP000010091">
    <property type="component" value="Chromosome 10"/>
</dbReference>
<dbReference type="GO" id="GO:0005886">
    <property type="term" value="C:plasma membrane"/>
    <property type="evidence" value="ECO:0007669"/>
    <property type="project" value="UniProtKB-SubCell"/>
</dbReference>
<dbReference type="GO" id="GO:0005366">
    <property type="term" value="F:myo-inositol:proton symporter activity"/>
    <property type="evidence" value="ECO:0000316"/>
    <property type="project" value="UniProtKB"/>
</dbReference>
<dbReference type="GO" id="GO:1904679">
    <property type="term" value="P:myo-inositol import across plasma membrane"/>
    <property type="evidence" value="ECO:0000316"/>
    <property type="project" value="UniProtKB"/>
</dbReference>
<dbReference type="GO" id="GO:0035756">
    <property type="term" value="P:symbiont-mediated migration across host transepithelium"/>
    <property type="evidence" value="ECO:0000316"/>
    <property type="project" value="UniProtKB"/>
</dbReference>
<dbReference type="FunFam" id="1.20.1250.20:FF:000073">
    <property type="entry name" value="MFS myo-inositol transporter, putative"/>
    <property type="match status" value="1"/>
</dbReference>
<dbReference type="Gene3D" id="1.20.1250.20">
    <property type="entry name" value="MFS general substrate transporter like domains"/>
    <property type="match status" value="1"/>
</dbReference>
<dbReference type="InterPro" id="IPR020846">
    <property type="entry name" value="MFS_dom"/>
</dbReference>
<dbReference type="InterPro" id="IPR005828">
    <property type="entry name" value="MFS_sugar_transport-like"/>
</dbReference>
<dbReference type="InterPro" id="IPR036259">
    <property type="entry name" value="MFS_trans_sf"/>
</dbReference>
<dbReference type="InterPro" id="IPR050814">
    <property type="entry name" value="Myo-inositol_Transporter"/>
</dbReference>
<dbReference type="InterPro" id="IPR003663">
    <property type="entry name" value="Sugar/inositol_transpt"/>
</dbReference>
<dbReference type="InterPro" id="IPR005829">
    <property type="entry name" value="Sugar_transporter_CS"/>
</dbReference>
<dbReference type="NCBIfam" id="TIGR00879">
    <property type="entry name" value="SP"/>
    <property type="match status" value="1"/>
</dbReference>
<dbReference type="PANTHER" id="PTHR48020">
    <property type="entry name" value="PROTON MYO-INOSITOL COTRANSPORTER"/>
    <property type="match status" value="1"/>
</dbReference>
<dbReference type="PANTHER" id="PTHR48020:SF12">
    <property type="entry name" value="PROTON MYO-INOSITOL COTRANSPORTER"/>
    <property type="match status" value="1"/>
</dbReference>
<dbReference type="Pfam" id="PF00083">
    <property type="entry name" value="Sugar_tr"/>
    <property type="match status" value="1"/>
</dbReference>
<dbReference type="PRINTS" id="PR00171">
    <property type="entry name" value="SUGRTRNSPORT"/>
</dbReference>
<dbReference type="SUPFAM" id="SSF103473">
    <property type="entry name" value="MFS general substrate transporter"/>
    <property type="match status" value="1"/>
</dbReference>
<dbReference type="PROSITE" id="PS50850">
    <property type="entry name" value="MFS"/>
    <property type="match status" value="1"/>
</dbReference>
<dbReference type="PROSITE" id="PS00216">
    <property type="entry name" value="SUGAR_TRANSPORT_1"/>
    <property type="match status" value="1"/>
</dbReference>
<dbReference type="PROSITE" id="PS00217">
    <property type="entry name" value="SUGAR_TRANSPORT_2"/>
    <property type="match status" value="1"/>
</dbReference>
<gene>
    <name evidence="7" type="primary">ITR1A</name>
    <name evidence="11" type="ORF">CNAG_04552</name>
</gene>